<sequence>MENVPGSFGTSASFALRFGQTIFSAASLIFMCFDYDFYDFTTFCYLATVMAIVTPWSILLALTDTYSVLVKLLPQELRVLSIVFAGDFVLSFLSLGGACAVASATELLASADGKICDGNLCIQYQVSAALAFLCWFLLLASALFNFWSLPSLYY</sequence>
<dbReference type="EMBL" id="GL348717">
    <property type="protein sequence ID" value="EFH54032.1"/>
    <property type="status" value="ALT_SEQ"/>
    <property type="molecule type" value="Genomic_DNA"/>
</dbReference>
<dbReference type="RefSeq" id="XP_002877773.1">
    <property type="nucleotide sequence ID" value="XM_002877727.1"/>
</dbReference>
<dbReference type="STRING" id="81972.D7LTJ4"/>
<dbReference type="eggNOG" id="ENOG502RZFM">
    <property type="taxonomic scope" value="Eukaryota"/>
</dbReference>
<dbReference type="OrthoDB" id="1881155at2759"/>
<dbReference type="Proteomes" id="UP000008694">
    <property type="component" value="Unassembled WGS sequence"/>
</dbReference>
<dbReference type="GO" id="GO:0005886">
    <property type="term" value="C:plasma membrane"/>
    <property type="evidence" value="ECO:0007669"/>
    <property type="project" value="UniProtKB-SubCell"/>
</dbReference>
<dbReference type="InterPro" id="IPR006702">
    <property type="entry name" value="CASP_dom"/>
</dbReference>
<dbReference type="InterPro" id="IPR045009">
    <property type="entry name" value="CASPL-5"/>
</dbReference>
<dbReference type="PANTHER" id="PTHR32021">
    <property type="entry name" value="CASP-LIKE PROTEIN 5B3"/>
    <property type="match status" value="1"/>
</dbReference>
<dbReference type="PANTHER" id="PTHR32021:SF21">
    <property type="entry name" value="CASP-LIKE PROTEIN 5C2"/>
    <property type="match status" value="1"/>
</dbReference>
<dbReference type="Pfam" id="PF04535">
    <property type="entry name" value="CASP_dom"/>
    <property type="match status" value="1"/>
</dbReference>
<reference key="1">
    <citation type="journal article" date="2011" name="Nat. Genet.">
        <title>The Arabidopsis lyrata genome sequence and the basis of rapid genome size change.</title>
        <authorList>
            <person name="Hu T.T."/>
            <person name="Pattyn P."/>
            <person name="Bakker E.G."/>
            <person name="Cao J."/>
            <person name="Cheng J.-F."/>
            <person name="Clark R.M."/>
            <person name="Fahlgren N."/>
            <person name="Fawcett J.A."/>
            <person name="Grimwood J."/>
            <person name="Gundlach H."/>
            <person name="Haberer G."/>
            <person name="Hollister J.D."/>
            <person name="Ossowski S."/>
            <person name="Ottilar R.P."/>
            <person name="Salamov A.A."/>
            <person name="Schneeberger K."/>
            <person name="Spannagl M."/>
            <person name="Wang X."/>
            <person name="Yang L."/>
            <person name="Nasrallah M.E."/>
            <person name="Bergelson J."/>
            <person name="Carrington J.C."/>
            <person name="Gaut B.S."/>
            <person name="Schmutz J."/>
            <person name="Mayer K.F.X."/>
            <person name="Van de Peer Y."/>
            <person name="Grigoriev I.V."/>
            <person name="Nordborg M."/>
            <person name="Weigel D."/>
            <person name="Guo Y.-L."/>
        </authorList>
    </citation>
    <scope>NUCLEOTIDE SEQUENCE [LARGE SCALE GENOMIC DNA]</scope>
    <source>
        <strain>cv. MN47</strain>
    </source>
</reference>
<reference key="2">
    <citation type="journal article" date="2014" name="Plant Physiol.">
        <title>Functional and evolutionary analysis of the CASPARIAN STRIP MEMBRANE DOMAIN PROTEIN family.</title>
        <authorList>
            <person name="Roppolo D."/>
            <person name="Boeckmann B."/>
            <person name="Pfister A."/>
            <person name="Boutet E."/>
            <person name="Rubio M.C."/>
            <person name="Denervaud-Tendon V."/>
            <person name="Vermeer J.E."/>
            <person name="Gheyselinck J."/>
            <person name="Xenarios I."/>
            <person name="Geldner N."/>
        </authorList>
    </citation>
    <scope>GENE FAMILY</scope>
    <scope>NOMENCLATURE</scope>
</reference>
<organism>
    <name type="scientific">Arabidopsis lyrata subsp. lyrata</name>
    <name type="common">Lyre-leaved rock-cress</name>
    <dbReference type="NCBI Taxonomy" id="81972"/>
    <lineage>
        <taxon>Eukaryota</taxon>
        <taxon>Viridiplantae</taxon>
        <taxon>Streptophyta</taxon>
        <taxon>Embryophyta</taxon>
        <taxon>Tracheophyta</taxon>
        <taxon>Spermatophyta</taxon>
        <taxon>Magnoliopsida</taxon>
        <taxon>eudicotyledons</taxon>
        <taxon>Gunneridae</taxon>
        <taxon>Pentapetalae</taxon>
        <taxon>rosids</taxon>
        <taxon>malvids</taxon>
        <taxon>Brassicales</taxon>
        <taxon>Brassicaceae</taxon>
        <taxon>Camelineae</taxon>
        <taxon>Arabidopsis</taxon>
    </lineage>
</organism>
<feature type="chain" id="PRO_0000422081" description="CASP-like protein ARALYDRAFT_485429">
    <location>
        <begin position="1"/>
        <end position="154"/>
    </location>
</feature>
<feature type="topological domain" description="Cytoplasmic" evidence="2">
    <location>
        <begin position="1"/>
        <end position="12"/>
    </location>
</feature>
<feature type="transmembrane region" description="Helical" evidence="2">
    <location>
        <begin position="13"/>
        <end position="33"/>
    </location>
</feature>
<feature type="topological domain" description="Extracellular" evidence="2">
    <location>
        <begin position="34"/>
        <end position="41"/>
    </location>
</feature>
<feature type="transmembrane region" description="Helical" evidence="2">
    <location>
        <begin position="42"/>
        <end position="62"/>
    </location>
</feature>
<feature type="topological domain" description="Cytoplasmic" evidence="2">
    <location>
        <begin position="63"/>
        <end position="81"/>
    </location>
</feature>
<feature type="transmembrane region" description="Helical" evidence="2">
    <location>
        <begin position="82"/>
        <end position="102"/>
    </location>
</feature>
<feature type="topological domain" description="Extracellular" evidence="2">
    <location>
        <begin position="103"/>
        <end position="128"/>
    </location>
</feature>
<feature type="transmembrane region" description="Helical" evidence="2">
    <location>
        <begin position="129"/>
        <end position="149"/>
    </location>
</feature>
<feature type="topological domain" description="Cytoplasmic" evidence="2">
    <location>
        <begin position="150"/>
        <end position="154"/>
    </location>
</feature>
<comment type="subunit">
    <text evidence="1">Homodimer and heterodimers.</text>
</comment>
<comment type="subcellular location">
    <subcellularLocation>
        <location evidence="1">Cell membrane</location>
        <topology evidence="1">Multi-pass membrane protein</topology>
    </subcellularLocation>
</comment>
<comment type="similarity">
    <text evidence="3">Belongs to the Casparian strip membrane proteins (CASP) family.</text>
</comment>
<comment type="sequence caution" evidence="3">
    <conflict type="erroneous gene model prediction">
        <sequence resource="EMBL-CDS" id="EFH54032"/>
    </conflict>
</comment>
<accession>D7LTJ4</accession>
<evidence type="ECO:0000250" key="1"/>
<evidence type="ECO:0000255" key="2"/>
<evidence type="ECO:0000305" key="3"/>
<gene>
    <name type="ORF">ARALYDRAFT_485429</name>
</gene>
<protein>
    <recommendedName>
        <fullName>CASP-like protein ARALYDRAFT_485429</fullName>
    </recommendedName>
</protein>
<keyword id="KW-1003">Cell membrane</keyword>
<keyword id="KW-0472">Membrane</keyword>
<keyword id="KW-1185">Reference proteome</keyword>
<keyword id="KW-0812">Transmembrane</keyword>
<keyword id="KW-1133">Transmembrane helix</keyword>
<name>CSPLN_ARALL</name>
<proteinExistence type="inferred from homology"/>